<sequence>MVKKNFIPSVSLVRRDLPTLVTTTTSSTALSKPTSSVVSETSSKSLPSLTSSAFSTSSGATSSSSLIVASITPPSTAGNPFILNAADKPNGTVYIAVGAVIGAIFISILIWWLVSSYLSRRFTMTNSYANDSKNLYRGHHKHSSSLQSNPFDINDEKSYMQDDWDSMSQLESSQYEDAASPFNPIQDPFTDNRRSLFISPTLQVSQYEKSHSRHQSKDTNIFIDDPSLYVGTYLEEEEEEERKLNLNRPQRAASPERKEKKINSMEGYHKRNQSSLGLIPVASATSNTSSPKKAHKRQAPSMFLDDVLNGREII</sequence>
<name>YNF8_YEASL</name>
<comment type="subcellular location">
    <subcellularLocation>
        <location evidence="1">Vacuole membrane</location>
        <topology evidence="1">Single-pass membrane protein</topology>
    </subcellularLocation>
</comment>
<comment type="similarity">
    <text evidence="5">Belongs to the PRM5 family.</text>
</comment>
<reference key="1">
    <citation type="journal article" date="2011" name="PLoS Genet.">
        <title>Whole-genome comparison reveals novel genetic elements that characterize the genome of industrial strains of Saccharomyces cerevisiae.</title>
        <authorList>
            <person name="Borneman A.R."/>
            <person name="Desany B.A."/>
            <person name="Riches D."/>
            <person name="Affourtit J.P."/>
            <person name="Forgan A.H."/>
            <person name="Pretorius I.S."/>
            <person name="Egholm M."/>
            <person name="Chambers P.J."/>
        </authorList>
    </citation>
    <scope>NUCLEOTIDE SEQUENCE [LARGE SCALE GENOMIC DNA]</scope>
    <source>
        <strain>Lalvin QA23</strain>
    </source>
</reference>
<organism>
    <name type="scientific">Saccharomyces cerevisiae (strain Lalvin QA23)</name>
    <name type="common">Baker's yeast</name>
    <dbReference type="NCBI Taxonomy" id="764098"/>
    <lineage>
        <taxon>Eukaryota</taxon>
        <taxon>Fungi</taxon>
        <taxon>Dikarya</taxon>
        <taxon>Ascomycota</taxon>
        <taxon>Saccharomycotina</taxon>
        <taxon>Saccharomycetes</taxon>
        <taxon>Saccharomycetales</taxon>
        <taxon>Saccharomycetaceae</taxon>
        <taxon>Saccharomyces</taxon>
    </lineage>
</organism>
<keyword id="KW-0472">Membrane</keyword>
<keyword id="KW-0597">Phosphoprotein</keyword>
<keyword id="KW-0812">Transmembrane</keyword>
<keyword id="KW-1133">Transmembrane helix</keyword>
<keyword id="KW-0926">Vacuole</keyword>
<evidence type="ECO:0000250" key="1"/>
<evidence type="ECO:0000250" key="2">
    <source>
        <dbReference type="UniProtKB" id="P53947"/>
    </source>
</evidence>
<evidence type="ECO:0000255" key="3"/>
<evidence type="ECO:0000256" key="4">
    <source>
        <dbReference type="SAM" id="MobiDB-lite"/>
    </source>
</evidence>
<evidence type="ECO:0000305" key="5"/>
<gene>
    <name type="ORF">QA23_4119</name>
</gene>
<accession>E7KTL7</accession>
<dbReference type="EMBL" id="ADVV01000071">
    <property type="protein sequence ID" value="EGA81192.1"/>
    <property type="molecule type" value="Genomic_DNA"/>
</dbReference>
<dbReference type="HOGENOM" id="CLU_061224_0_0_1"/>
<dbReference type="GO" id="GO:0005935">
    <property type="term" value="C:cellular bud neck"/>
    <property type="evidence" value="ECO:0007669"/>
    <property type="project" value="TreeGrafter"/>
</dbReference>
<dbReference type="GO" id="GO:0000324">
    <property type="term" value="C:fungal-type vacuole"/>
    <property type="evidence" value="ECO:0007669"/>
    <property type="project" value="TreeGrafter"/>
</dbReference>
<dbReference type="GO" id="GO:0005774">
    <property type="term" value="C:vacuolar membrane"/>
    <property type="evidence" value="ECO:0007669"/>
    <property type="project" value="UniProtKB-SubCell"/>
</dbReference>
<dbReference type="InterPro" id="IPR051009">
    <property type="entry name" value="PRM"/>
</dbReference>
<dbReference type="PANTHER" id="PTHR36089">
    <property type="entry name" value="CHITIN SYNTHASE 3 COMPLEX PROTEIN CSI2-RELATED"/>
    <property type="match status" value="1"/>
</dbReference>
<dbReference type="PANTHER" id="PTHR36089:SF1">
    <property type="entry name" value="CHITIN SYNTHASE 3 COMPLEX PROTEIN CSI2-RELATED"/>
    <property type="match status" value="1"/>
</dbReference>
<proteinExistence type="inferred from homology"/>
<protein>
    <recommendedName>
        <fullName>Vacuolar membrane protein QA23_4119</fullName>
    </recommendedName>
</protein>
<feature type="chain" id="PRO_0000409325" description="Vacuolar membrane protein QA23_4119">
    <location>
        <begin position="1"/>
        <end position="314"/>
    </location>
</feature>
<feature type="transmembrane region" description="Helical" evidence="3">
    <location>
        <begin position="93"/>
        <end position="113"/>
    </location>
</feature>
<feature type="region of interest" description="Disordered" evidence="4">
    <location>
        <begin position="32"/>
        <end position="60"/>
    </location>
</feature>
<feature type="region of interest" description="Disordered" evidence="4">
    <location>
        <begin position="240"/>
        <end position="309"/>
    </location>
</feature>
<feature type="compositionally biased region" description="Basic and acidic residues" evidence="4">
    <location>
        <begin position="254"/>
        <end position="269"/>
    </location>
</feature>
<feature type="modified residue" description="Phosphoserine" evidence="2">
    <location>
        <position position="148"/>
    </location>
</feature>
<feature type="modified residue" description="Phosphoserine" evidence="2">
    <location>
        <position position="254"/>
    </location>
</feature>
<feature type="modified residue" description="Phosphoserine" evidence="2">
    <location>
        <position position="274"/>
    </location>
</feature>